<name>GATB_SYNSC</name>
<keyword id="KW-0067">ATP-binding</keyword>
<keyword id="KW-0436">Ligase</keyword>
<keyword id="KW-0547">Nucleotide-binding</keyword>
<keyword id="KW-0648">Protein biosynthesis</keyword>
<proteinExistence type="inferred from homology"/>
<gene>
    <name evidence="1" type="primary">gatB</name>
    <name type="ordered locus">Syncc9605_2497</name>
</gene>
<accession>Q3AGQ3</accession>
<organism>
    <name type="scientific">Synechococcus sp. (strain CC9605)</name>
    <dbReference type="NCBI Taxonomy" id="110662"/>
    <lineage>
        <taxon>Bacteria</taxon>
        <taxon>Bacillati</taxon>
        <taxon>Cyanobacteriota</taxon>
        <taxon>Cyanophyceae</taxon>
        <taxon>Synechococcales</taxon>
        <taxon>Synechococcaceae</taxon>
        <taxon>Synechococcus</taxon>
    </lineage>
</organism>
<reference key="1">
    <citation type="submission" date="2005-07" db="EMBL/GenBank/DDBJ databases">
        <title>Complete sequence of Synechococcus sp. CC9605.</title>
        <authorList>
            <consortium name="US DOE Joint Genome Institute"/>
            <person name="Copeland A."/>
            <person name="Lucas S."/>
            <person name="Lapidus A."/>
            <person name="Barry K."/>
            <person name="Detter J.C."/>
            <person name="Glavina T."/>
            <person name="Hammon N."/>
            <person name="Israni S."/>
            <person name="Pitluck S."/>
            <person name="Schmutz J."/>
            <person name="Martinez M."/>
            <person name="Larimer F."/>
            <person name="Land M."/>
            <person name="Kyrpides N."/>
            <person name="Ivanova N."/>
            <person name="Richardson P."/>
        </authorList>
    </citation>
    <scope>NUCLEOTIDE SEQUENCE [LARGE SCALE GENOMIC DNA]</scope>
    <source>
        <strain>CC9605</strain>
    </source>
</reference>
<comment type="function">
    <text evidence="1">Allows the formation of correctly charged Asn-tRNA(Asn) or Gln-tRNA(Gln) through the transamidation of misacylated Asp-tRNA(Asn) or Glu-tRNA(Gln) in organisms which lack either or both of asparaginyl-tRNA or glutaminyl-tRNA synthetases. The reaction takes place in the presence of glutamine and ATP through an activated phospho-Asp-tRNA(Asn) or phospho-Glu-tRNA(Gln).</text>
</comment>
<comment type="catalytic activity">
    <reaction evidence="1">
        <text>L-glutamyl-tRNA(Gln) + L-glutamine + ATP + H2O = L-glutaminyl-tRNA(Gln) + L-glutamate + ADP + phosphate + H(+)</text>
        <dbReference type="Rhea" id="RHEA:17521"/>
        <dbReference type="Rhea" id="RHEA-COMP:9681"/>
        <dbReference type="Rhea" id="RHEA-COMP:9684"/>
        <dbReference type="ChEBI" id="CHEBI:15377"/>
        <dbReference type="ChEBI" id="CHEBI:15378"/>
        <dbReference type="ChEBI" id="CHEBI:29985"/>
        <dbReference type="ChEBI" id="CHEBI:30616"/>
        <dbReference type="ChEBI" id="CHEBI:43474"/>
        <dbReference type="ChEBI" id="CHEBI:58359"/>
        <dbReference type="ChEBI" id="CHEBI:78520"/>
        <dbReference type="ChEBI" id="CHEBI:78521"/>
        <dbReference type="ChEBI" id="CHEBI:456216"/>
    </reaction>
</comment>
<comment type="catalytic activity">
    <reaction evidence="1">
        <text>L-aspartyl-tRNA(Asn) + L-glutamine + ATP + H2O = L-asparaginyl-tRNA(Asn) + L-glutamate + ADP + phosphate + 2 H(+)</text>
        <dbReference type="Rhea" id="RHEA:14513"/>
        <dbReference type="Rhea" id="RHEA-COMP:9674"/>
        <dbReference type="Rhea" id="RHEA-COMP:9677"/>
        <dbReference type="ChEBI" id="CHEBI:15377"/>
        <dbReference type="ChEBI" id="CHEBI:15378"/>
        <dbReference type="ChEBI" id="CHEBI:29985"/>
        <dbReference type="ChEBI" id="CHEBI:30616"/>
        <dbReference type="ChEBI" id="CHEBI:43474"/>
        <dbReference type="ChEBI" id="CHEBI:58359"/>
        <dbReference type="ChEBI" id="CHEBI:78515"/>
        <dbReference type="ChEBI" id="CHEBI:78516"/>
        <dbReference type="ChEBI" id="CHEBI:456216"/>
    </reaction>
</comment>
<comment type="subunit">
    <text evidence="1">Heterotrimer of A, B and C subunits.</text>
</comment>
<comment type="similarity">
    <text evidence="1">Belongs to the GatB/GatE family. GatB subfamily.</text>
</comment>
<feature type="chain" id="PRO_0000241285" description="Aspartyl/glutamyl-tRNA(Asn/Gln) amidotransferase subunit B">
    <location>
        <begin position="1"/>
        <end position="494"/>
    </location>
</feature>
<evidence type="ECO:0000255" key="1">
    <source>
        <dbReference type="HAMAP-Rule" id="MF_00121"/>
    </source>
</evidence>
<dbReference type="EC" id="6.3.5.-" evidence="1"/>
<dbReference type="EMBL" id="CP000110">
    <property type="protein sequence ID" value="ABB36229.1"/>
    <property type="molecule type" value="Genomic_DNA"/>
</dbReference>
<dbReference type="RefSeq" id="WP_011365424.1">
    <property type="nucleotide sequence ID" value="NC_007516.1"/>
</dbReference>
<dbReference type="SMR" id="Q3AGQ3"/>
<dbReference type="STRING" id="110662.Syncc9605_2497"/>
<dbReference type="KEGG" id="syd:Syncc9605_2497"/>
<dbReference type="eggNOG" id="COG0064">
    <property type="taxonomic scope" value="Bacteria"/>
</dbReference>
<dbReference type="HOGENOM" id="CLU_019240_0_0_3"/>
<dbReference type="OrthoDB" id="9804078at2"/>
<dbReference type="GO" id="GO:0050566">
    <property type="term" value="F:asparaginyl-tRNA synthase (glutamine-hydrolyzing) activity"/>
    <property type="evidence" value="ECO:0007669"/>
    <property type="project" value="RHEA"/>
</dbReference>
<dbReference type="GO" id="GO:0005524">
    <property type="term" value="F:ATP binding"/>
    <property type="evidence" value="ECO:0007669"/>
    <property type="project" value="UniProtKB-KW"/>
</dbReference>
<dbReference type="GO" id="GO:0050567">
    <property type="term" value="F:glutaminyl-tRNA synthase (glutamine-hydrolyzing) activity"/>
    <property type="evidence" value="ECO:0007669"/>
    <property type="project" value="UniProtKB-UniRule"/>
</dbReference>
<dbReference type="GO" id="GO:0070681">
    <property type="term" value="P:glutaminyl-tRNAGln biosynthesis via transamidation"/>
    <property type="evidence" value="ECO:0007669"/>
    <property type="project" value="TreeGrafter"/>
</dbReference>
<dbReference type="GO" id="GO:0006412">
    <property type="term" value="P:translation"/>
    <property type="evidence" value="ECO:0007669"/>
    <property type="project" value="UniProtKB-UniRule"/>
</dbReference>
<dbReference type="FunFam" id="1.10.10.410:FF:000001">
    <property type="entry name" value="Aspartyl/glutamyl-tRNA(Asn/Gln) amidotransferase subunit B"/>
    <property type="match status" value="1"/>
</dbReference>
<dbReference type="FunFam" id="1.10.150.380:FF:000001">
    <property type="entry name" value="Aspartyl/glutamyl-tRNA(Asn/Gln) amidotransferase subunit B"/>
    <property type="match status" value="1"/>
</dbReference>
<dbReference type="Gene3D" id="1.10.10.410">
    <property type="match status" value="1"/>
</dbReference>
<dbReference type="Gene3D" id="1.10.150.380">
    <property type="entry name" value="GatB domain, N-terminal subdomain"/>
    <property type="match status" value="1"/>
</dbReference>
<dbReference type="HAMAP" id="MF_00121">
    <property type="entry name" value="GatB"/>
    <property type="match status" value="1"/>
</dbReference>
<dbReference type="InterPro" id="IPR017959">
    <property type="entry name" value="Asn/Gln-tRNA_amidoTrfase_suB/E"/>
</dbReference>
<dbReference type="InterPro" id="IPR006075">
    <property type="entry name" value="Asn/Gln-tRNA_Trfase_suB/E_cat"/>
</dbReference>
<dbReference type="InterPro" id="IPR018027">
    <property type="entry name" value="Asn/Gln_amidotransferase"/>
</dbReference>
<dbReference type="InterPro" id="IPR003789">
    <property type="entry name" value="Asn/Gln_tRNA_amidoTrase-B-like"/>
</dbReference>
<dbReference type="InterPro" id="IPR004413">
    <property type="entry name" value="GatB"/>
</dbReference>
<dbReference type="InterPro" id="IPR042114">
    <property type="entry name" value="GatB_C_1"/>
</dbReference>
<dbReference type="InterPro" id="IPR023168">
    <property type="entry name" value="GatB_Yqey_C_2"/>
</dbReference>
<dbReference type="InterPro" id="IPR017958">
    <property type="entry name" value="Gln-tRNA_amidoTrfase_suB_CS"/>
</dbReference>
<dbReference type="InterPro" id="IPR014746">
    <property type="entry name" value="Gln_synth/guanido_kin_cat_dom"/>
</dbReference>
<dbReference type="NCBIfam" id="TIGR00133">
    <property type="entry name" value="gatB"/>
    <property type="match status" value="1"/>
</dbReference>
<dbReference type="NCBIfam" id="NF004012">
    <property type="entry name" value="PRK05477.1-2"/>
    <property type="match status" value="1"/>
</dbReference>
<dbReference type="NCBIfam" id="NF004014">
    <property type="entry name" value="PRK05477.1-4"/>
    <property type="match status" value="1"/>
</dbReference>
<dbReference type="PANTHER" id="PTHR11659">
    <property type="entry name" value="GLUTAMYL-TRNA GLN AMIDOTRANSFERASE SUBUNIT B MITOCHONDRIAL AND PROKARYOTIC PET112-RELATED"/>
    <property type="match status" value="1"/>
</dbReference>
<dbReference type="PANTHER" id="PTHR11659:SF0">
    <property type="entry name" value="GLUTAMYL-TRNA(GLN) AMIDOTRANSFERASE SUBUNIT B, MITOCHONDRIAL"/>
    <property type="match status" value="1"/>
</dbReference>
<dbReference type="Pfam" id="PF02934">
    <property type="entry name" value="GatB_N"/>
    <property type="match status" value="1"/>
</dbReference>
<dbReference type="Pfam" id="PF02637">
    <property type="entry name" value="GatB_Yqey"/>
    <property type="match status" value="1"/>
</dbReference>
<dbReference type="SMART" id="SM00845">
    <property type="entry name" value="GatB_Yqey"/>
    <property type="match status" value="1"/>
</dbReference>
<dbReference type="SUPFAM" id="SSF89095">
    <property type="entry name" value="GatB/YqeY motif"/>
    <property type="match status" value="1"/>
</dbReference>
<dbReference type="SUPFAM" id="SSF55931">
    <property type="entry name" value="Glutamine synthetase/guanido kinase"/>
    <property type="match status" value="1"/>
</dbReference>
<dbReference type="PROSITE" id="PS01234">
    <property type="entry name" value="GATB"/>
    <property type="match status" value="1"/>
</dbReference>
<sequence length="494" mass="54300">MPAPAAKDQAWEAVIGLETHVQLGTDSKIFTAASTTFGDEPNTHIDPVVCGLPGTLPVLNQKVLEYAVKAAMALNLNIAEHSKFDRKQYFYPDLPKNYQISQYDEPIAEEGCIEVEVAEKGKDTYLKTIGIERLHMEEDAGKLVHAGSDRLAGSTHSLVDYNRAGVALAEIVSKPDLRTGREAAEYASEIRRIMRYLGVSDGNMQEGSLRCDVNISVRRGPDAPFGTKVEIKNMNSFSAIQKACEYEIKRQIKAYETGEPIVQETRLWDEGKQLTKSMRSKEGASDYRYFPDPDLGPIEVSADQRESWRAELPELPAAKRHRYADELGLSQYDARVLTDERPMADYFEAVVGAGADAKLAANWITGDIAAHVNSNRLSYAELPFRPEKLAEMVQLIDGGKISGKIAKEILPELLEKGGSPKAIVDERGLGIISDPAAIEAIVDELLGAHPDEVEAFRGGKTKLQGFFVGQLMKKTGGKADPKLANQILSKKLKV</sequence>
<protein>
    <recommendedName>
        <fullName evidence="1">Aspartyl/glutamyl-tRNA(Asn/Gln) amidotransferase subunit B</fullName>
        <shortName evidence="1">Asp/Glu-ADT subunit B</shortName>
        <ecNumber evidence="1">6.3.5.-</ecNumber>
    </recommendedName>
</protein>